<keyword id="KW-0878">Amphibian defense peptide</keyword>
<keyword id="KW-0044">Antibiotic</keyword>
<keyword id="KW-0929">Antimicrobial</keyword>
<keyword id="KW-0903">Direct protein sequencing</keyword>
<keyword id="KW-1015">Disulfide bond</keyword>
<keyword id="KW-0964">Secreted</keyword>
<reference key="1">
    <citation type="journal article" date="1995" name="Biochem. Biophys. Res. Commun.">
        <title>Isolation and characterization of novel antimicrobial peptides, rugosins A, B and C, from the skin of the frog, Rana rugosa.</title>
        <authorList>
            <person name="Suzuki S."/>
            <person name="Ohe Y."/>
            <person name="Kagegawa T."/>
            <person name="Tatemoto K."/>
        </authorList>
    </citation>
    <scope>PROTEIN SEQUENCE</scope>
    <source>
        <tissue>Skin secretion</tissue>
    </source>
</reference>
<accession>P80954</accession>
<organism>
    <name type="scientific">Glandirana rugosa</name>
    <name type="common">Japanese wrinkled frog</name>
    <name type="synonym">Rana rugosa</name>
    <dbReference type="NCBI Taxonomy" id="8410"/>
    <lineage>
        <taxon>Eukaryota</taxon>
        <taxon>Metazoa</taxon>
        <taxon>Chordata</taxon>
        <taxon>Craniata</taxon>
        <taxon>Vertebrata</taxon>
        <taxon>Euteleostomi</taxon>
        <taxon>Amphibia</taxon>
        <taxon>Batrachia</taxon>
        <taxon>Anura</taxon>
        <taxon>Neobatrachia</taxon>
        <taxon>Ranoidea</taxon>
        <taxon>Ranidae</taxon>
        <taxon>Glandirana</taxon>
    </lineage>
</organism>
<feature type="peptide" id="PRO_0000044662" description="Rugosin-A">
    <location>
        <begin position="1"/>
        <end position="33"/>
    </location>
</feature>
<feature type="disulfide bond">
    <location>
        <begin position="27"/>
        <end position="33"/>
    </location>
</feature>
<proteinExistence type="evidence at protein level"/>
<name>RUGA_GLARU</name>
<protein>
    <recommendedName>
        <fullName>Rugosin-A</fullName>
    </recommendedName>
</protein>
<evidence type="ECO:0000305" key="1"/>
<dbReference type="SMR" id="P80954"/>
<dbReference type="GO" id="GO:0005576">
    <property type="term" value="C:extracellular region"/>
    <property type="evidence" value="ECO:0007669"/>
    <property type="project" value="UniProtKB-SubCell"/>
</dbReference>
<dbReference type="GO" id="GO:0042742">
    <property type="term" value="P:defense response to bacterium"/>
    <property type="evidence" value="ECO:0007669"/>
    <property type="project" value="UniProtKB-KW"/>
</dbReference>
<dbReference type="InterPro" id="IPR012521">
    <property type="entry name" value="Antimicrobial_frog_2"/>
</dbReference>
<dbReference type="Pfam" id="PF08023">
    <property type="entry name" value="Antimicrobial_2"/>
    <property type="match status" value="1"/>
</dbReference>
<sequence length="33" mass="3440">GLLNTFKDWAISIAKGAGKGVLTTLSCKLDKSC</sequence>
<comment type="function">
    <text>Has antibacterial activity against Gram-positive bacteria.</text>
</comment>
<comment type="subcellular location">
    <subcellularLocation>
        <location>Secreted</location>
    </subcellularLocation>
</comment>
<comment type="tissue specificity">
    <text>Expressed by the skin glands.</text>
</comment>
<comment type="similarity">
    <text evidence="1">Belongs to the frog skin active peptide (FSAP) family. Brevinin subfamily.</text>
</comment>